<reference key="1">
    <citation type="journal article" date="2008" name="J. Bacteriol.">
        <title>The complete genome sequence of Actinobacillus pleuropneumoniae L20 (serotype 5b).</title>
        <authorList>
            <person name="Foote S.J."/>
            <person name="Bosse J.T."/>
            <person name="Bouevitch A.B."/>
            <person name="Langford P.R."/>
            <person name="Young N.M."/>
            <person name="Nash J.H.E."/>
        </authorList>
    </citation>
    <scope>NUCLEOTIDE SEQUENCE [LARGE SCALE GENOMIC DNA]</scope>
    <source>
        <strain>L20</strain>
    </source>
</reference>
<sequence>MEKFRVHGPFTLSGTVDISGAKNAALPILFAAVLATEPVTLTNVPDLKDVDTTFKILRKLGVVVERDESGAVQIDASKIDHYVAPYELVKTMRASIWALAPLVARFHEGQVSLPGGCTIGARPVDMHISGLEKMGALIELDEGYVKATSNGRLHGARIYMDKVSVGATLSVMMAATLAEGTTTIENAAREPEIVDTALFLNAMGAKISGAGTDTITIEGVERLTGCQHRIVADRIETGTFLVAAAVSGGKITCRGTKADTLEAVIEKLREAGMEVTVTEDTITLDSKGQRPKAVNIRTMPHPGFPTDMQAQFTLLNVVAEGTSRITETIFENRFMHIPELNRMGAKGEIEGNTAICHGVEKLKSAEVMATDLRASISLVLAGCIASGETIVDRIYHIDRGYEHIEDKLRGIGAKIERFSTKFEE</sequence>
<name>MURA_ACTP2</name>
<feature type="chain" id="PRO_1000023013" description="UDP-N-acetylglucosamine 1-carboxyvinyltransferase">
    <location>
        <begin position="1"/>
        <end position="424"/>
    </location>
</feature>
<feature type="active site" description="Proton donor" evidence="1">
    <location>
        <position position="117"/>
    </location>
</feature>
<feature type="binding site" evidence="1">
    <location>
        <begin position="22"/>
        <end position="23"/>
    </location>
    <ligand>
        <name>phosphoenolpyruvate</name>
        <dbReference type="ChEBI" id="CHEBI:58702"/>
    </ligand>
</feature>
<feature type="binding site" evidence="1">
    <location>
        <position position="93"/>
    </location>
    <ligand>
        <name>UDP-N-acetyl-alpha-D-glucosamine</name>
        <dbReference type="ChEBI" id="CHEBI:57705"/>
    </ligand>
</feature>
<feature type="binding site" evidence="1">
    <location>
        <begin position="162"/>
        <end position="165"/>
    </location>
    <ligand>
        <name>UDP-N-acetyl-alpha-D-glucosamine</name>
        <dbReference type="ChEBI" id="CHEBI:57705"/>
    </ligand>
</feature>
<feature type="binding site" evidence="1">
    <location>
        <position position="307"/>
    </location>
    <ligand>
        <name>UDP-N-acetyl-alpha-D-glucosamine</name>
        <dbReference type="ChEBI" id="CHEBI:57705"/>
    </ligand>
</feature>
<feature type="binding site" evidence="1">
    <location>
        <position position="329"/>
    </location>
    <ligand>
        <name>UDP-N-acetyl-alpha-D-glucosamine</name>
        <dbReference type="ChEBI" id="CHEBI:57705"/>
    </ligand>
</feature>
<feature type="modified residue" description="2-(S-cysteinyl)pyruvic acid O-phosphothioketal" evidence="1">
    <location>
        <position position="117"/>
    </location>
</feature>
<keyword id="KW-0131">Cell cycle</keyword>
<keyword id="KW-0132">Cell division</keyword>
<keyword id="KW-0133">Cell shape</keyword>
<keyword id="KW-0961">Cell wall biogenesis/degradation</keyword>
<keyword id="KW-0963">Cytoplasm</keyword>
<keyword id="KW-0573">Peptidoglycan synthesis</keyword>
<keyword id="KW-0670">Pyruvate</keyword>
<keyword id="KW-1185">Reference proteome</keyword>
<keyword id="KW-0808">Transferase</keyword>
<organism>
    <name type="scientific">Actinobacillus pleuropneumoniae serotype 5b (strain L20)</name>
    <dbReference type="NCBI Taxonomy" id="416269"/>
    <lineage>
        <taxon>Bacteria</taxon>
        <taxon>Pseudomonadati</taxon>
        <taxon>Pseudomonadota</taxon>
        <taxon>Gammaproteobacteria</taxon>
        <taxon>Pasteurellales</taxon>
        <taxon>Pasteurellaceae</taxon>
        <taxon>Actinobacillus</taxon>
    </lineage>
</organism>
<protein>
    <recommendedName>
        <fullName evidence="1">UDP-N-acetylglucosamine 1-carboxyvinyltransferase</fullName>
        <ecNumber evidence="1">2.5.1.7</ecNumber>
    </recommendedName>
    <alternativeName>
        <fullName evidence="1">Enoylpyruvate transferase</fullName>
    </alternativeName>
    <alternativeName>
        <fullName evidence="1">UDP-N-acetylglucosamine enolpyruvyl transferase</fullName>
        <shortName evidence="1">EPT</shortName>
    </alternativeName>
</protein>
<accession>A3N1T6</accession>
<gene>
    <name evidence="1" type="primary">murA</name>
    <name type="ordered locus">APL_1286</name>
</gene>
<proteinExistence type="inferred from homology"/>
<comment type="function">
    <text evidence="1">Cell wall formation. Adds enolpyruvyl to UDP-N-acetylglucosamine.</text>
</comment>
<comment type="catalytic activity">
    <reaction evidence="1">
        <text>phosphoenolpyruvate + UDP-N-acetyl-alpha-D-glucosamine = UDP-N-acetyl-3-O-(1-carboxyvinyl)-alpha-D-glucosamine + phosphate</text>
        <dbReference type="Rhea" id="RHEA:18681"/>
        <dbReference type="ChEBI" id="CHEBI:43474"/>
        <dbReference type="ChEBI" id="CHEBI:57705"/>
        <dbReference type="ChEBI" id="CHEBI:58702"/>
        <dbReference type="ChEBI" id="CHEBI:68483"/>
        <dbReference type="EC" id="2.5.1.7"/>
    </reaction>
</comment>
<comment type="pathway">
    <text evidence="1">Cell wall biogenesis; peptidoglycan biosynthesis.</text>
</comment>
<comment type="subcellular location">
    <subcellularLocation>
        <location evidence="1">Cytoplasm</location>
    </subcellularLocation>
</comment>
<comment type="similarity">
    <text evidence="1">Belongs to the EPSP synthase family. MurA subfamily.</text>
</comment>
<dbReference type="EC" id="2.5.1.7" evidence="1"/>
<dbReference type="EMBL" id="CP000569">
    <property type="protein sequence ID" value="ABN74372.1"/>
    <property type="molecule type" value="Genomic_DNA"/>
</dbReference>
<dbReference type="RefSeq" id="WP_005601833.1">
    <property type="nucleotide sequence ID" value="NC_009053.1"/>
</dbReference>
<dbReference type="SMR" id="A3N1T6"/>
<dbReference type="STRING" id="416269.APL_1286"/>
<dbReference type="EnsemblBacteria" id="ABN74372">
    <property type="protein sequence ID" value="ABN74372"/>
    <property type="gene ID" value="APL_1286"/>
</dbReference>
<dbReference type="KEGG" id="apl:APL_1286"/>
<dbReference type="eggNOG" id="COG0766">
    <property type="taxonomic scope" value="Bacteria"/>
</dbReference>
<dbReference type="HOGENOM" id="CLU_027387_0_0_6"/>
<dbReference type="UniPathway" id="UPA00219"/>
<dbReference type="Proteomes" id="UP000001432">
    <property type="component" value="Chromosome"/>
</dbReference>
<dbReference type="GO" id="GO:0005737">
    <property type="term" value="C:cytoplasm"/>
    <property type="evidence" value="ECO:0007669"/>
    <property type="project" value="UniProtKB-SubCell"/>
</dbReference>
<dbReference type="GO" id="GO:0008760">
    <property type="term" value="F:UDP-N-acetylglucosamine 1-carboxyvinyltransferase activity"/>
    <property type="evidence" value="ECO:0007669"/>
    <property type="project" value="UniProtKB-UniRule"/>
</dbReference>
<dbReference type="GO" id="GO:0051301">
    <property type="term" value="P:cell division"/>
    <property type="evidence" value="ECO:0007669"/>
    <property type="project" value="UniProtKB-KW"/>
</dbReference>
<dbReference type="GO" id="GO:0071555">
    <property type="term" value="P:cell wall organization"/>
    <property type="evidence" value="ECO:0007669"/>
    <property type="project" value="UniProtKB-KW"/>
</dbReference>
<dbReference type="GO" id="GO:0009252">
    <property type="term" value="P:peptidoglycan biosynthetic process"/>
    <property type="evidence" value="ECO:0007669"/>
    <property type="project" value="UniProtKB-UniRule"/>
</dbReference>
<dbReference type="GO" id="GO:0008360">
    <property type="term" value="P:regulation of cell shape"/>
    <property type="evidence" value="ECO:0007669"/>
    <property type="project" value="UniProtKB-KW"/>
</dbReference>
<dbReference type="GO" id="GO:0019277">
    <property type="term" value="P:UDP-N-acetylgalactosamine biosynthetic process"/>
    <property type="evidence" value="ECO:0007669"/>
    <property type="project" value="InterPro"/>
</dbReference>
<dbReference type="CDD" id="cd01555">
    <property type="entry name" value="UdpNAET"/>
    <property type="match status" value="1"/>
</dbReference>
<dbReference type="FunFam" id="3.65.10.10:FF:000002">
    <property type="entry name" value="UDP-N-acetylglucosamine 1-carboxyvinyltransferase"/>
    <property type="match status" value="1"/>
</dbReference>
<dbReference type="Gene3D" id="3.65.10.10">
    <property type="entry name" value="Enolpyruvate transferase domain"/>
    <property type="match status" value="2"/>
</dbReference>
<dbReference type="HAMAP" id="MF_00111">
    <property type="entry name" value="MurA"/>
    <property type="match status" value="1"/>
</dbReference>
<dbReference type="InterPro" id="IPR001986">
    <property type="entry name" value="Enolpyruvate_Tfrase_dom"/>
</dbReference>
<dbReference type="InterPro" id="IPR036968">
    <property type="entry name" value="Enolpyruvate_Tfrase_sf"/>
</dbReference>
<dbReference type="InterPro" id="IPR050068">
    <property type="entry name" value="MurA_subfamily"/>
</dbReference>
<dbReference type="InterPro" id="IPR013792">
    <property type="entry name" value="RNA3'P_cycl/enolpyr_Trfase_a/b"/>
</dbReference>
<dbReference type="InterPro" id="IPR005750">
    <property type="entry name" value="UDP_GlcNAc_COvinyl_MurA"/>
</dbReference>
<dbReference type="NCBIfam" id="TIGR01072">
    <property type="entry name" value="murA"/>
    <property type="match status" value="1"/>
</dbReference>
<dbReference type="NCBIfam" id="NF006873">
    <property type="entry name" value="PRK09369.1"/>
    <property type="match status" value="1"/>
</dbReference>
<dbReference type="PANTHER" id="PTHR43783">
    <property type="entry name" value="UDP-N-ACETYLGLUCOSAMINE 1-CARBOXYVINYLTRANSFERASE"/>
    <property type="match status" value="1"/>
</dbReference>
<dbReference type="PANTHER" id="PTHR43783:SF1">
    <property type="entry name" value="UDP-N-ACETYLGLUCOSAMINE 1-CARBOXYVINYLTRANSFERASE"/>
    <property type="match status" value="1"/>
</dbReference>
<dbReference type="Pfam" id="PF00275">
    <property type="entry name" value="EPSP_synthase"/>
    <property type="match status" value="1"/>
</dbReference>
<dbReference type="SUPFAM" id="SSF55205">
    <property type="entry name" value="EPT/RTPC-like"/>
    <property type="match status" value="1"/>
</dbReference>
<evidence type="ECO:0000255" key="1">
    <source>
        <dbReference type="HAMAP-Rule" id="MF_00111"/>
    </source>
</evidence>